<reference evidence="9" key="1">
    <citation type="journal article" date="1998" name="Science">
        <title>Genome sequence of the nematode C. elegans: a platform for investigating biology.</title>
        <authorList>
            <consortium name="The C. elegans sequencing consortium"/>
        </authorList>
    </citation>
    <scope>NUCLEOTIDE SEQUENCE [LARGE SCALE GENOMIC DNA]</scope>
    <source>
        <strain evidence="9">Bristol N2</strain>
    </source>
</reference>
<reference evidence="8" key="2">
    <citation type="journal article" date="2013" name="Dev. Biol.">
        <title>The contactin RIG-6 mediates neuronal and non-neuronal cell migration in Caenorhabditis elegans.</title>
        <authorList>
            <person name="Katidou M."/>
            <person name="Tavernarakis N."/>
            <person name="Karagogeos D."/>
        </authorList>
    </citation>
    <scope>FUNCTION</scope>
    <scope>SUBCELLULAR LOCATION</scope>
    <scope>TISSUE SPECIFICITY</scope>
    <scope>DEVELOPMENTAL STAGE</scope>
    <scope>DISRUPTION PHENOTYPE</scope>
</reference>
<reference key="3">
    <citation type="journal article" date="2017" name="Elife">
        <title>Multiple conserved cell adhesion protein interactions mediate neural wiring of a sensory circuit in C. elegans.</title>
        <authorList>
            <person name="Kim B."/>
            <person name="Emmons S.W."/>
        </authorList>
    </citation>
    <scope>FUNCTION</scope>
    <scope>INTERACTION WITH SAX-7</scope>
    <scope>SUBCELLULAR LOCATION</scope>
    <scope>TISSUE SPECIFICITY</scope>
    <scope>MUTAGENESIS OF 438-ARG--LEU-1196</scope>
</reference>
<dbReference type="EMBL" id="BX284602">
    <property type="protein sequence ID" value="CCD66510.1"/>
    <property type="molecule type" value="Genomic_DNA"/>
</dbReference>
<dbReference type="EMBL" id="BX284602">
    <property type="protein sequence ID" value="CCD66509.1"/>
    <property type="molecule type" value="Genomic_DNA"/>
</dbReference>
<dbReference type="PIR" id="T15746">
    <property type="entry name" value="T15746"/>
</dbReference>
<dbReference type="RefSeq" id="NP_001022014.1">
    <molecule id="H2KZ60-1"/>
    <property type="nucleotide sequence ID" value="NM_001026843.8"/>
</dbReference>
<dbReference type="RefSeq" id="NP_001364725.1">
    <molecule id="H2KZ60-4"/>
    <property type="nucleotide sequence ID" value="NM_001377791.2"/>
</dbReference>
<dbReference type="RefSeq" id="NP_740979.1">
    <property type="nucleotide sequence ID" value="NM_170981.4"/>
</dbReference>
<dbReference type="SMR" id="H2KZ60"/>
<dbReference type="FunCoup" id="H2KZ60">
    <property type="interactions" value="583"/>
</dbReference>
<dbReference type="STRING" id="6239.C33F10.5d.1"/>
<dbReference type="GlyCosmos" id="H2KZ60">
    <property type="glycosylation" value="13 sites, No reported glycans"/>
</dbReference>
<dbReference type="PaxDb" id="6239-C33F10.5b"/>
<dbReference type="PeptideAtlas" id="H2KZ60"/>
<dbReference type="EnsemblMetazoa" id="C33F10.5c.1">
    <molecule id="H2KZ60-4"/>
    <property type="protein sequence ID" value="C33F10.5c.1"/>
    <property type="gene ID" value="WBGene00016354"/>
</dbReference>
<dbReference type="EnsemblMetazoa" id="C33F10.5d.1">
    <molecule id="H2KZ60-1"/>
    <property type="protein sequence ID" value="C33F10.5d.1"/>
    <property type="gene ID" value="WBGene00016354"/>
</dbReference>
<dbReference type="GeneID" id="173828"/>
<dbReference type="KEGG" id="cel:CELE_C33F10.5"/>
<dbReference type="UCSC" id="C33F10.5c.1">
    <property type="organism name" value="c. elegans"/>
</dbReference>
<dbReference type="AGR" id="WB:WBGene00016354"/>
<dbReference type="CTD" id="173828"/>
<dbReference type="WormBase" id="C33F10.5c">
    <molecule id="H2KZ60-4"/>
    <property type="protein sequence ID" value="CE31679"/>
    <property type="gene ID" value="WBGene00016354"/>
    <property type="gene designation" value="rig-6"/>
</dbReference>
<dbReference type="WormBase" id="C33F10.5d">
    <molecule id="H2KZ60-1"/>
    <property type="protein sequence ID" value="CE37327"/>
    <property type="gene ID" value="WBGene00016354"/>
    <property type="gene designation" value="rig-6"/>
</dbReference>
<dbReference type="eggNOG" id="KOG3513">
    <property type="taxonomic scope" value="Eukaryota"/>
</dbReference>
<dbReference type="InParanoid" id="H2KZ60"/>
<dbReference type="OrthoDB" id="5982258at2759"/>
<dbReference type="Reactome" id="R-CEL-1474228">
    <property type="pathway name" value="Degradation of the extracellular matrix"/>
</dbReference>
<dbReference type="Reactome" id="R-CEL-210991">
    <property type="pathway name" value="Basigin interactions"/>
</dbReference>
<dbReference type="Reactome" id="R-CEL-216083">
    <property type="pathway name" value="Integrin cell surface interactions"/>
</dbReference>
<dbReference type="Reactome" id="R-CEL-433692">
    <property type="pathway name" value="Proton-coupled monocarboxylate transport"/>
</dbReference>
<dbReference type="Reactome" id="R-CEL-9749641">
    <property type="pathway name" value="Aspirin ADME"/>
</dbReference>
<dbReference type="PRO" id="PR:H2KZ60"/>
<dbReference type="Proteomes" id="UP000001940">
    <property type="component" value="Chromosome II"/>
</dbReference>
<dbReference type="Bgee" id="WBGene00016354">
    <property type="expression patterns" value="Expressed in pharyngeal muscle cell (C elegans) and 3 other cell types or tissues"/>
</dbReference>
<dbReference type="GO" id="GO:0030424">
    <property type="term" value="C:axon"/>
    <property type="evidence" value="ECO:0000314"/>
    <property type="project" value="UniProtKB"/>
</dbReference>
<dbReference type="GO" id="GO:0005737">
    <property type="term" value="C:cytoplasm"/>
    <property type="evidence" value="ECO:0007669"/>
    <property type="project" value="UniProtKB-SubCell"/>
</dbReference>
<dbReference type="GO" id="GO:0043025">
    <property type="term" value="C:neuronal cell body"/>
    <property type="evidence" value="ECO:0000314"/>
    <property type="project" value="UniProtKB"/>
</dbReference>
<dbReference type="GO" id="GO:0043204">
    <property type="term" value="C:perikaryon"/>
    <property type="evidence" value="ECO:0007669"/>
    <property type="project" value="UniProtKB-SubCell"/>
</dbReference>
<dbReference type="GO" id="GO:0005886">
    <property type="term" value="C:plasma membrane"/>
    <property type="evidence" value="ECO:0000318"/>
    <property type="project" value="GO_Central"/>
</dbReference>
<dbReference type="GO" id="GO:0098552">
    <property type="term" value="C:side of membrane"/>
    <property type="evidence" value="ECO:0007669"/>
    <property type="project" value="UniProtKB-KW"/>
</dbReference>
<dbReference type="GO" id="GO:0045202">
    <property type="term" value="C:synapse"/>
    <property type="evidence" value="ECO:0000314"/>
    <property type="project" value="UniProtKB"/>
</dbReference>
<dbReference type="GO" id="GO:0098632">
    <property type="term" value="F:cell-cell adhesion mediator activity"/>
    <property type="evidence" value="ECO:0000318"/>
    <property type="project" value="GO_Central"/>
</dbReference>
<dbReference type="GO" id="GO:0007411">
    <property type="term" value="P:axon guidance"/>
    <property type="evidence" value="ECO:0000318"/>
    <property type="project" value="GO_Central"/>
</dbReference>
<dbReference type="GO" id="GO:0070593">
    <property type="term" value="P:dendrite self-avoidance"/>
    <property type="evidence" value="ECO:0000318"/>
    <property type="project" value="GO_Central"/>
</dbReference>
<dbReference type="GO" id="GO:0035545">
    <property type="term" value="P:determination of left/right asymmetry in nervous system"/>
    <property type="evidence" value="ECO:0000315"/>
    <property type="project" value="UniProtKB"/>
</dbReference>
<dbReference type="GO" id="GO:0033563">
    <property type="term" value="P:dorsal/ventral axon guidance"/>
    <property type="evidence" value="ECO:0000315"/>
    <property type="project" value="UniProtKB"/>
</dbReference>
<dbReference type="GO" id="GO:0009792">
    <property type="term" value="P:embryo development ending in birth or egg hatching"/>
    <property type="evidence" value="ECO:0000315"/>
    <property type="project" value="UniProtKB"/>
</dbReference>
<dbReference type="GO" id="GO:0060562">
    <property type="term" value="P:epithelial tube morphogenesis"/>
    <property type="evidence" value="ECO:0000315"/>
    <property type="project" value="UniProtKB"/>
</dbReference>
<dbReference type="GO" id="GO:0007156">
    <property type="term" value="P:homophilic cell adhesion via plasma membrane adhesion molecules"/>
    <property type="evidence" value="ECO:0000318"/>
    <property type="project" value="GO_Central"/>
</dbReference>
<dbReference type="GO" id="GO:0008045">
    <property type="term" value="P:motor neuron axon guidance"/>
    <property type="evidence" value="ECO:0000315"/>
    <property type="project" value="UniProtKB"/>
</dbReference>
<dbReference type="GO" id="GO:2000747">
    <property type="term" value="P:negative regulation of defecation rhythm"/>
    <property type="evidence" value="ECO:0000315"/>
    <property type="project" value="UniProtKB"/>
</dbReference>
<dbReference type="GO" id="GO:0090327">
    <property type="term" value="P:negative regulation of locomotion involved in locomotory behavior"/>
    <property type="evidence" value="ECO:0000315"/>
    <property type="project" value="UniProtKB"/>
</dbReference>
<dbReference type="GO" id="GO:0040015">
    <property type="term" value="P:negative regulation of multicellular organism growth"/>
    <property type="evidence" value="ECO:0000315"/>
    <property type="project" value="UniProtKB"/>
</dbReference>
<dbReference type="GO" id="GO:0048842">
    <property type="term" value="P:positive regulation of axon extension involved in axon guidance"/>
    <property type="evidence" value="ECO:0000315"/>
    <property type="project" value="UniProtKB"/>
</dbReference>
<dbReference type="GO" id="GO:1903356">
    <property type="term" value="P:positive regulation of distal tip cell migration"/>
    <property type="evidence" value="ECO:0000315"/>
    <property type="project" value="UniProtKB"/>
</dbReference>
<dbReference type="GO" id="GO:0035150">
    <property type="term" value="P:regulation of tube size"/>
    <property type="evidence" value="ECO:0000315"/>
    <property type="project" value="UniProtKB"/>
</dbReference>
<dbReference type="CDD" id="cd00063">
    <property type="entry name" value="FN3"/>
    <property type="match status" value="1"/>
</dbReference>
<dbReference type="CDD" id="cd00096">
    <property type="entry name" value="Ig"/>
    <property type="match status" value="1"/>
</dbReference>
<dbReference type="FunFam" id="2.60.40.10:FF:002786">
    <property type="entry name" value="Contactin rig-6"/>
    <property type="match status" value="1"/>
</dbReference>
<dbReference type="FunFam" id="2.60.40.10:FF:003314">
    <property type="entry name" value="Contactin rig-6"/>
    <property type="match status" value="1"/>
</dbReference>
<dbReference type="Gene3D" id="2.60.40.10">
    <property type="entry name" value="Immunoglobulins"/>
    <property type="match status" value="8"/>
</dbReference>
<dbReference type="InterPro" id="IPR016187">
    <property type="entry name" value="CTDL_fold"/>
</dbReference>
<dbReference type="InterPro" id="IPR003961">
    <property type="entry name" value="FN3_dom"/>
</dbReference>
<dbReference type="InterPro" id="IPR036116">
    <property type="entry name" value="FN3_sf"/>
</dbReference>
<dbReference type="InterPro" id="IPR007110">
    <property type="entry name" value="Ig-like_dom"/>
</dbReference>
<dbReference type="InterPro" id="IPR036179">
    <property type="entry name" value="Ig-like_dom_sf"/>
</dbReference>
<dbReference type="InterPro" id="IPR013783">
    <property type="entry name" value="Ig-like_fold"/>
</dbReference>
<dbReference type="InterPro" id="IPR013098">
    <property type="entry name" value="Ig_I-set"/>
</dbReference>
<dbReference type="InterPro" id="IPR003599">
    <property type="entry name" value="Ig_sub"/>
</dbReference>
<dbReference type="InterPro" id="IPR003598">
    <property type="entry name" value="Ig_sub2"/>
</dbReference>
<dbReference type="PANTHER" id="PTHR10075">
    <property type="entry name" value="BASIGIN RELATED"/>
    <property type="match status" value="1"/>
</dbReference>
<dbReference type="PANTHER" id="PTHR10075:SF100">
    <property type="entry name" value="FASCICLIN-2"/>
    <property type="match status" value="1"/>
</dbReference>
<dbReference type="Pfam" id="PF00041">
    <property type="entry name" value="fn3"/>
    <property type="match status" value="1"/>
</dbReference>
<dbReference type="Pfam" id="PF07679">
    <property type="entry name" value="I-set"/>
    <property type="match status" value="2"/>
</dbReference>
<dbReference type="Pfam" id="PF13927">
    <property type="entry name" value="Ig_3"/>
    <property type="match status" value="2"/>
</dbReference>
<dbReference type="SMART" id="SM00060">
    <property type="entry name" value="FN3"/>
    <property type="match status" value="4"/>
</dbReference>
<dbReference type="SMART" id="SM00409">
    <property type="entry name" value="IG"/>
    <property type="match status" value="4"/>
</dbReference>
<dbReference type="SMART" id="SM00408">
    <property type="entry name" value="IGc2"/>
    <property type="match status" value="4"/>
</dbReference>
<dbReference type="SUPFAM" id="SSF56436">
    <property type="entry name" value="C-type lectin-like"/>
    <property type="match status" value="1"/>
</dbReference>
<dbReference type="SUPFAM" id="SSF49265">
    <property type="entry name" value="Fibronectin type III"/>
    <property type="match status" value="2"/>
</dbReference>
<dbReference type="SUPFAM" id="SSF48726">
    <property type="entry name" value="Immunoglobulin"/>
    <property type="match status" value="5"/>
</dbReference>
<dbReference type="PROSITE" id="PS50853">
    <property type="entry name" value="FN3"/>
    <property type="match status" value="4"/>
</dbReference>
<dbReference type="PROSITE" id="PS50835">
    <property type="entry name" value="IG_LIKE"/>
    <property type="match status" value="6"/>
</dbReference>
<keyword id="KW-0025">Alternative splicing</keyword>
<keyword id="KW-0130">Cell adhesion</keyword>
<keyword id="KW-1003">Cell membrane</keyword>
<keyword id="KW-0966">Cell projection</keyword>
<keyword id="KW-0963">Cytoplasm</keyword>
<keyword id="KW-1015">Disulfide bond</keyword>
<keyword id="KW-0325">Glycoprotein</keyword>
<keyword id="KW-0336">GPI-anchor</keyword>
<keyword id="KW-0393">Immunoglobulin domain</keyword>
<keyword id="KW-0449">Lipoprotein</keyword>
<keyword id="KW-0472">Membrane</keyword>
<keyword id="KW-0524">Neurogenesis</keyword>
<keyword id="KW-1185">Reference proteome</keyword>
<keyword id="KW-0677">Repeat</keyword>
<keyword id="KW-0732">Signal</keyword>
<keyword id="KW-0770">Synapse</keyword>
<keyword id="KW-0812">Transmembrane</keyword>
<keyword id="KW-1133">Transmembrane helix</keyword>
<feature type="signal peptide" evidence="1">
    <location>
        <begin position="1"/>
        <end position="19"/>
    </location>
</feature>
<feature type="chain" id="PRO_5003564315" description="Contactin rig-6" evidence="8">
    <location>
        <begin position="20"/>
        <end position="1177"/>
    </location>
</feature>
<feature type="propeptide" id="PRO_0000437246" description="Removed in mature form" evidence="1">
    <location>
        <begin position="1178"/>
        <end position="1196"/>
    </location>
</feature>
<feature type="transmembrane region" description="Helical" evidence="1">
    <location>
        <begin position="1174"/>
        <end position="1194"/>
    </location>
</feature>
<feature type="domain" description="Ig-like C2-type 1" evidence="2">
    <location>
        <begin position="144"/>
        <end position="225"/>
    </location>
</feature>
<feature type="domain" description="Ig-like C2-type 2" evidence="2">
    <location>
        <begin position="232"/>
        <end position="319"/>
    </location>
</feature>
<feature type="domain" description="Ig-like C2-type 3" evidence="2">
    <location>
        <begin position="355"/>
        <end position="438"/>
    </location>
</feature>
<feature type="domain" description="Ig-like C2-type 4" evidence="2">
    <location>
        <begin position="441"/>
        <end position="533"/>
    </location>
</feature>
<feature type="domain" description="Ig-like C2-type 5" evidence="2">
    <location>
        <begin position="539"/>
        <end position="626"/>
    </location>
</feature>
<feature type="domain" description="Ig-like C2-type 6" evidence="2">
    <location>
        <begin position="631"/>
        <end position="730"/>
    </location>
</feature>
<feature type="domain" description="Fibronectin type-III 1" evidence="3">
    <location>
        <begin position="736"/>
        <end position="844"/>
    </location>
</feature>
<feature type="domain" description="Fibronectin type-III 2" evidence="3">
    <location>
        <begin position="849"/>
        <end position="961"/>
    </location>
</feature>
<feature type="domain" description="Fibronectin type-III 3" evidence="3">
    <location>
        <begin position="963"/>
        <end position="1057"/>
    </location>
</feature>
<feature type="domain" description="Fibronectin type-III 4" evidence="3">
    <location>
        <begin position="1064"/>
        <end position="1168"/>
    </location>
</feature>
<feature type="lipid moiety-binding region" description="GPI-anchor amidated serine" evidence="1">
    <location>
        <position position="1177"/>
    </location>
</feature>
<feature type="glycosylation site" description="N-linked (GlcNAc...) asparagine" evidence="4">
    <location>
        <position position="100"/>
    </location>
</feature>
<feature type="glycosylation site" description="N-linked (GlcNAc...) asparagine" evidence="4">
    <location>
        <position position="195"/>
    </location>
</feature>
<feature type="glycosylation site" description="N-linked (GlcNAc...) asparagine" evidence="4">
    <location>
        <position position="343"/>
    </location>
</feature>
<feature type="glycosylation site" description="N-linked (GlcNAc...) asparagine" evidence="4">
    <location>
        <position position="457"/>
    </location>
</feature>
<feature type="glycosylation site" description="N-linked (GlcNAc...) asparagine" evidence="4">
    <location>
        <position position="644"/>
    </location>
</feature>
<feature type="glycosylation site" description="N-linked (GlcNAc...) asparagine" evidence="4">
    <location>
        <position position="895"/>
    </location>
</feature>
<feature type="glycosylation site" description="N-linked (GlcNAc...) asparagine" evidence="4">
    <location>
        <position position="925"/>
    </location>
</feature>
<feature type="glycosylation site" description="N-linked (GlcNAc...) asparagine" evidence="4">
    <location>
        <position position="945"/>
    </location>
</feature>
<feature type="glycosylation site" description="N-linked (GlcNAc...) asparagine" evidence="4">
    <location>
        <position position="974"/>
    </location>
</feature>
<feature type="glycosylation site" description="N-linked (GlcNAc...) asparagine" evidence="4">
    <location>
        <position position="979"/>
    </location>
</feature>
<feature type="glycosylation site" description="N-linked (GlcNAc...) asparagine" evidence="4">
    <location>
        <position position="986"/>
    </location>
</feature>
<feature type="glycosylation site" description="N-linked (GlcNAc...) asparagine" evidence="4">
    <location>
        <position position="1002"/>
    </location>
</feature>
<feature type="glycosylation site" description="N-linked (GlcNAc...) asparagine" evidence="4">
    <location>
        <position position="1092"/>
    </location>
</feature>
<feature type="disulfide bond" evidence="2">
    <location>
        <begin position="169"/>
        <end position="220"/>
    </location>
</feature>
<feature type="disulfide bond" evidence="2">
    <location>
        <begin position="263"/>
        <end position="316"/>
    </location>
</feature>
<feature type="disulfide bond" evidence="2">
    <location>
        <begin position="372"/>
        <end position="420"/>
    </location>
</feature>
<feature type="disulfide bond" evidence="2">
    <location>
        <begin position="462"/>
        <end position="517"/>
    </location>
</feature>
<feature type="disulfide bond" evidence="2">
    <location>
        <begin position="562"/>
        <end position="610"/>
    </location>
</feature>
<feature type="disulfide bond" evidence="2">
    <location>
        <begin position="653"/>
        <end position="718"/>
    </location>
</feature>
<feature type="splice variant" id="VSP_058504" description="In isoform c." evidence="8">
    <location>
        <begin position="1"/>
        <end position="422"/>
    </location>
</feature>
<feature type="mutagenesis site" description="In gk438569; disrupts axonal connections between the male-specific sensory neuron HOA and the interneuron AVG, and between the two PHC sensory neurons and the AVG interneuron. No disruption to the connection between HOA and the PHC neurons." evidence="6">
    <location>
        <begin position="438"/>
        <end position="1196"/>
    </location>
</feature>
<accession>H2KZ60</accession>
<accession>Q18382</accession>
<accession>Q8MQA8</accession>
<accession>Q9BIA2</accession>
<sequence>MMMLIRCISIFLLFGFVNALIDEASCPIGWQIASDQCVRIVIAPANLKHSKKYCHHEGGELMDTSVTLLLEDVMDLLKNLHENGLSEPTFHVGGMGQALNRTEDGNYKIITINPSSHFPFICSLNKMARRSLLFQQKLLPVGAPQISLTGQSEIYFHPRHDADYIALPCTVQGNPKPTVAWYKNDVEVLSPSMSNVSYLLSGGNLLVPASSTLAYSSFHCTARNSLGEVRSPPILLKPSFIDPFRPHRLDVYSLATGGAKLDCDAPAHQPKSLTYSWLYGSSTDRILSQNERKFISLDGTLFFSYVTAEDEDSYACSLSVYSTQSGHYGPFFRLISSTPKLVNSTFPPKLDSTQPQIFPEDPKVGDSIYLECFAYASPLPQYKWSRVDGKPIPARSHISNYGRVLKIEKVNYGDAGKYKCVAMNAFGSAAGEVHVKLRAPPSILQGLHDRLVPTESNVSFECLLSNADSYSSVEWFKDAKPIVPLLLPAEKRKRLKIDHNVLHLKFADETDSGVYQCVASNDVGSSSSSALLTVKDSAPVFPPNAMSRKVFAAFGSTVSIPCIFEASPRFHGKWADAGGSKLPQKGRIRDEEGVISIEKVLHEDAGLFFCTAHNKLGKAHAQVQLIVVNKPSIKTNFLDEETVNMSCEVELTCENSAECPEALFEWKINDRPAKEYPSLKSKVHEKKSGHKGRHLKQKVDLEVPKSLAGSRQIGRFACSSLYGGSSEFVTKPQLPSPIALTVEQMDEDGKKKKMFRLRWRLPPQHRDTRDHSPKVEGYLVELRTRKNRKWRAAERQLVGNMEKDSITVENLLPNTEYQFRVRSVESAAIGEPSIPSDWVKTAPGAPSETIDNLKWRSLDSQTLLVEWQPIEIGQESSGDNLRYRVSWSEATVGKNATDDMKLSNQDDDFENHLDSDQPQAILKLNTTEGCRMVVLAVRPVNDQGNGSVGTDTIAFLNSHGELKKVSLHNVKPINASHVNISWTWDNTSDCDTKHAVQITCINLSGSEISATVASDRIFWMLGGLEAETAYDCDLKAIDNHGSFGPASKKFRIHTKQHPPSETPLIGKLMMKQMKDTYTTILEWSSIELQKPNRTENGCGYKIFIYISETATEAIELDMPLQRLSDRRNPSARLDGLKLMYMYTIKVAGYNPGGIGPISEPRSIRLGSPGTMDYTTGSSDVPIPSLLLLLLLLLWRL</sequence>
<organism evidence="9">
    <name type="scientific">Caenorhabditis elegans</name>
    <dbReference type="NCBI Taxonomy" id="6239"/>
    <lineage>
        <taxon>Eukaryota</taxon>
        <taxon>Metazoa</taxon>
        <taxon>Ecdysozoa</taxon>
        <taxon>Nematoda</taxon>
        <taxon>Chromadorea</taxon>
        <taxon>Rhabditida</taxon>
        <taxon>Rhabditina</taxon>
        <taxon>Rhabditomorpha</taxon>
        <taxon>Rhabditoidea</taxon>
        <taxon>Rhabditidae</taxon>
        <taxon>Peloderinae</taxon>
        <taxon>Caenorhabditis</taxon>
    </lineage>
</organism>
<gene>
    <name evidence="11" type="primary">rig-6</name>
    <name evidence="11" type="ORF">C33F10.5</name>
</gene>
<comment type="function">
    <text evidence="5 6">Probable cell adhesion protein involved in patterning of the nervous system, playing a role in ALM and PLM touch receptor axon growth and VNC axon navigation (PubMed:23123963). By associating with the transmembrane protein sax-7, mediates axonal interactions to establish synaptic connections between the AVG interneuron and the two PHC sensory neurons (PubMed:28901288). Also required for non-neuronal cell migration in the excretory canal, regulating excretory canal elongation and excretory cell morphogenesis (PubMed:23123963). Plays a role in regulating male mating behavior (PubMed:28901288).</text>
</comment>
<comment type="subunit">
    <text evidence="6">Interacts with sax-7; the interaction establishes synaptic connections between neurons.</text>
</comment>
<comment type="subcellular location">
    <subcellularLocation>
        <location evidence="1">Cell membrane</location>
        <topology evidence="1">Lipid-anchor</topology>
        <topology evidence="1">GPI-anchor</topology>
    </subcellularLocation>
    <subcellularLocation>
        <location evidence="5 6">Perikaryon</location>
    </subcellularLocation>
    <subcellularLocation>
        <location evidence="5 6">Cell projection</location>
        <location evidence="5 6">Axon</location>
    </subcellularLocation>
    <subcellularLocation>
        <location evidence="5">Synapse</location>
    </subcellularLocation>
    <subcellularLocation>
        <location evidence="6">Cytoplasm</location>
    </subcellularLocation>
</comment>
<comment type="alternative products">
    <event type="alternative splicing"/>
    <isoform>
        <id>H2KZ60-1</id>
        <name evidence="11">d</name>
        <sequence type="displayed"/>
    </isoform>
    <isoform>
        <id>H2KZ60-4</id>
        <name evidence="10">c</name>
        <sequence type="described" ref="VSP_058504"/>
    </isoform>
</comment>
<comment type="tissue specificity">
    <text evidence="5 6">Expressed in neurons including the I1 and I3 pharyngeal interneurons, NSM and VNC motor neurons, HSN and CAN neurons, the ALM and PLM touch receptor neurons and other unidentified head neurons (PubMed:23123963). Expressed in AVG interneurons (PubMed:28901288). Also expressed in somatic muscles, the excretory canal, the excretory cell and the hypodermis (PubMed:23123963).</text>
</comment>
<comment type="developmental stage">
    <text evidence="5">Expressed throughout embryonic development and adulthood.</text>
</comment>
<comment type="disruption phenotype">
    <text evidence="5">RNAi-mediated knockdown results in truncated or shorter excretory canals, and also truncated ALM axons that fail to extend above the nerve ring, truncated PLM processes and abnormal VNC axon patterning.</text>
</comment>
<comment type="similarity">
    <text evidence="8">Belongs to the immunoglobulin superfamily. Contactin family.</text>
</comment>
<name>RIG6_CAEEL</name>
<protein>
    <recommendedName>
        <fullName evidence="7">Contactin rig-6</fullName>
    </recommendedName>
</protein>
<proteinExistence type="evidence at protein level"/>
<evidence type="ECO:0000255" key="1"/>
<evidence type="ECO:0000255" key="2">
    <source>
        <dbReference type="PROSITE-ProRule" id="PRU00114"/>
    </source>
</evidence>
<evidence type="ECO:0000255" key="3">
    <source>
        <dbReference type="PROSITE-ProRule" id="PRU00316"/>
    </source>
</evidence>
<evidence type="ECO:0000255" key="4">
    <source>
        <dbReference type="PROSITE-ProRule" id="PRU00498"/>
    </source>
</evidence>
<evidence type="ECO:0000269" key="5">
    <source>
    </source>
</evidence>
<evidence type="ECO:0000269" key="6">
    <source>
    </source>
</evidence>
<evidence type="ECO:0000303" key="7">
    <source>
    </source>
</evidence>
<evidence type="ECO:0000305" key="8"/>
<evidence type="ECO:0000312" key="9">
    <source>
        <dbReference type="Proteomes" id="UP000001940"/>
    </source>
</evidence>
<evidence type="ECO:0000312" key="10">
    <source>
        <dbReference type="WormBase" id="C33F10.5c"/>
    </source>
</evidence>
<evidence type="ECO:0000312" key="11">
    <source>
        <dbReference type="WormBase" id="C33F10.5d"/>
    </source>
</evidence>